<organism>
    <name type="scientific">Aspergillus oryzae (strain ATCC 42149 / RIB 40)</name>
    <name type="common">Yellow koji mold</name>
    <dbReference type="NCBI Taxonomy" id="510516"/>
    <lineage>
        <taxon>Eukaryota</taxon>
        <taxon>Fungi</taxon>
        <taxon>Dikarya</taxon>
        <taxon>Ascomycota</taxon>
        <taxon>Pezizomycotina</taxon>
        <taxon>Eurotiomycetes</taxon>
        <taxon>Eurotiomycetidae</taxon>
        <taxon>Eurotiales</taxon>
        <taxon>Aspergillaceae</taxon>
        <taxon>Aspergillus</taxon>
        <taxon>Aspergillus subgen. Circumdati</taxon>
    </lineage>
</organism>
<evidence type="ECO:0000269" key="1">
    <source>
    </source>
</evidence>
<evidence type="ECO:0000303" key="2">
    <source>
    </source>
</evidence>
<proteinExistence type="predicted"/>
<feature type="chain" id="PRO_0000458977" description="Kojic acid related protein 6">
    <location>
        <begin position="1"/>
        <end position="159"/>
    </location>
</feature>
<comment type="function">
    <text evidence="1">Negatively regulates mycelium growth and conidial formation and is required for stress tolerance (PubMed:35922587). Plays a role in kojic acid synthesis in coordination with kojA, kojR and kojT where it acts upstream of kojA (PubMed:35922587).</text>
</comment>
<comment type="disruption phenotype">
    <text evidence="1">Enhances the tolerance to cell wall, oxidative and heat stress but not osmotic stress (PubMed:35922587). Leads to reduced production of kojic acid, together with the reduced expression of kojA, kojR and kojT (PubMed:35922587). Also leads to the increase in mycelium growth and conidial formation (PubMed:35922587).</text>
</comment>
<accession>Q2U5I2</accession>
<sequence length="159" mass="17085">MFSRTIPAAARLFSTTGKPPAGIPVIVCGRTSQIGDVVREELQPEYEVTHLFLSPATAKSEIPALLRQTGSTTSTETDKSPAAIIMGGGYTQTDLQEIRAASQGPDTKPVAWLKVDPAKTPSSIPVGPEYGRAVAKRTKDRLDELVRNGGIDRDEVHFI</sequence>
<protein>
    <recommendedName>
        <fullName evidence="2">Kojic acid related protein 6</fullName>
    </recommendedName>
</protein>
<reference key="1">
    <citation type="journal article" date="2005" name="Nature">
        <title>Genome sequencing and analysis of Aspergillus oryzae.</title>
        <authorList>
            <person name="Machida M."/>
            <person name="Asai K."/>
            <person name="Sano M."/>
            <person name="Tanaka T."/>
            <person name="Kumagai T."/>
            <person name="Terai G."/>
            <person name="Kusumoto K."/>
            <person name="Arima T."/>
            <person name="Akita O."/>
            <person name="Kashiwagi Y."/>
            <person name="Abe K."/>
            <person name="Gomi K."/>
            <person name="Horiuchi H."/>
            <person name="Kitamoto K."/>
            <person name="Kobayashi T."/>
            <person name="Takeuchi M."/>
            <person name="Denning D.W."/>
            <person name="Galagan J.E."/>
            <person name="Nierman W.C."/>
            <person name="Yu J."/>
            <person name="Archer D.B."/>
            <person name="Bennett J.W."/>
            <person name="Bhatnagar D."/>
            <person name="Cleveland T.E."/>
            <person name="Fedorova N.D."/>
            <person name="Gotoh O."/>
            <person name="Horikawa H."/>
            <person name="Hosoyama A."/>
            <person name="Ichinomiya M."/>
            <person name="Igarashi R."/>
            <person name="Iwashita K."/>
            <person name="Juvvadi P.R."/>
            <person name="Kato M."/>
            <person name="Kato Y."/>
            <person name="Kin T."/>
            <person name="Kokubun A."/>
            <person name="Maeda H."/>
            <person name="Maeyama N."/>
            <person name="Maruyama J."/>
            <person name="Nagasaki H."/>
            <person name="Nakajima T."/>
            <person name="Oda K."/>
            <person name="Okada K."/>
            <person name="Paulsen I."/>
            <person name="Sakamoto K."/>
            <person name="Sawano T."/>
            <person name="Takahashi M."/>
            <person name="Takase K."/>
            <person name="Terabayashi Y."/>
            <person name="Wortman J.R."/>
            <person name="Yamada O."/>
            <person name="Yamagata Y."/>
            <person name="Anazawa H."/>
            <person name="Hata Y."/>
            <person name="Koide Y."/>
            <person name="Komori T."/>
            <person name="Koyama Y."/>
            <person name="Minetoki T."/>
            <person name="Suharnan S."/>
            <person name="Tanaka A."/>
            <person name="Isono K."/>
            <person name="Kuhara S."/>
            <person name="Ogasawara N."/>
            <person name="Kikuchi H."/>
        </authorList>
    </citation>
    <scope>NUCLEOTIDE SEQUENCE [LARGE SCALE GENOMIC DNA]</scope>
    <source>
        <strain>ATCC 42149 / RIB 40</strain>
    </source>
</reference>
<reference key="2">
    <citation type="journal article" date="2022" name="World J. Microbiol. Biotechnol.">
        <title>Disruption of Aokap6 near the kojic acid gene cluster affects the growth and kojic acid production in Aspergillus oryzae.</title>
        <authorList>
            <person name="Chen Z."/>
            <person name="Chen T."/>
            <person name="Wang H."/>
            <person name="Jiang C."/>
            <person name="Liu Y."/>
            <person name="Wu X."/>
            <person name="Li Y."/>
            <person name="Zeng B."/>
            <person name="Zhang Z."/>
        </authorList>
    </citation>
    <scope>FUNCTION</scope>
    <scope>DISRUPTION PHENOTYPE</scope>
</reference>
<gene>
    <name evidence="2" type="primary">kap6</name>
    <name type="ORF">AO090113000133</name>
</gene>
<name>KAP6_ASPOR</name>
<keyword id="KW-1185">Reference proteome</keyword>
<dbReference type="EMBL" id="BA000053">
    <property type="protein sequence ID" value="BAE63183.1"/>
    <property type="molecule type" value="Genomic_DNA"/>
</dbReference>
<dbReference type="RefSeq" id="XP_001824316.1">
    <property type="nucleotide sequence ID" value="XM_001824264.1"/>
</dbReference>
<dbReference type="EnsemblFungi" id="BAE63183">
    <property type="protein sequence ID" value="BAE63183"/>
    <property type="gene ID" value="AO090113000133"/>
</dbReference>
<dbReference type="GeneID" id="5995963"/>
<dbReference type="KEGG" id="aor:AO090113000133"/>
<dbReference type="VEuPathDB" id="FungiDB:AO090113000133"/>
<dbReference type="HOGENOM" id="CLU_121037_0_0_1"/>
<dbReference type="OMA" id="PPFGPEY"/>
<dbReference type="OrthoDB" id="117757at5052"/>
<dbReference type="Proteomes" id="UP000006564">
    <property type="component" value="Chromosome 5"/>
</dbReference>